<proteinExistence type="predicted"/>
<evidence type="ECO:0000256" key="1">
    <source>
        <dbReference type="SAM" id="MobiDB-lite"/>
    </source>
</evidence>
<keyword id="KW-1185">Reference proteome</keyword>
<reference key="1">
    <citation type="journal article" date="2002" name="Nature">
        <title>Sequence and analysis of chromosome 2 of Dictyostelium discoideum.</title>
        <authorList>
            <person name="Gloeckner G."/>
            <person name="Eichinger L."/>
            <person name="Szafranski K."/>
            <person name="Pachebat J.A."/>
            <person name="Bankier A.T."/>
            <person name="Dear P.H."/>
            <person name="Lehmann R."/>
            <person name="Baumgart C."/>
            <person name="Parra G."/>
            <person name="Abril J.F."/>
            <person name="Guigo R."/>
            <person name="Kumpf K."/>
            <person name="Tunggal B."/>
            <person name="Cox E.C."/>
            <person name="Quail M.A."/>
            <person name="Platzer M."/>
            <person name="Rosenthal A."/>
            <person name="Noegel A.A."/>
        </authorList>
    </citation>
    <scope>NUCLEOTIDE SEQUENCE [LARGE SCALE GENOMIC DNA]</scope>
    <source>
        <strain>AX4</strain>
    </source>
</reference>
<reference key="2">
    <citation type="journal article" date="2005" name="Nature">
        <title>The genome of the social amoeba Dictyostelium discoideum.</title>
        <authorList>
            <person name="Eichinger L."/>
            <person name="Pachebat J.A."/>
            <person name="Gloeckner G."/>
            <person name="Rajandream M.A."/>
            <person name="Sucgang R."/>
            <person name="Berriman M."/>
            <person name="Song J."/>
            <person name="Olsen R."/>
            <person name="Szafranski K."/>
            <person name="Xu Q."/>
            <person name="Tunggal B."/>
            <person name="Kummerfeld S."/>
            <person name="Madera M."/>
            <person name="Konfortov B.A."/>
            <person name="Rivero F."/>
            <person name="Bankier A.T."/>
            <person name="Lehmann R."/>
            <person name="Hamlin N."/>
            <person name="Davies R."/>
            <person name="Gaudet P."/>
            <person name="Fey P."/>
            <person name="Pilcher K."/>
            <person name="Chen G."/>
            <person name="Saunders D."/>
            <person name="Sodergren E.J."/>
            <person name="Davis P."/>
            <person name="Kerhornou A."/>
            <person name="Nie X."/>
            <person name="Hall N."/>
            <person name="Anjard C."/>
            <person name="Hemphill L."/>
            <person name="Bason N."/>
            <person name="Farbrother P."/>
            <person name="Desany B."/>
            <person name="Just E."/>
            <person name="Morio T."/>
            <person name="Rost R."/>
            <person name="Churcher C.M."/>
            <person name="Cooper J."/>
            <person name="Haydock S."/>
            <person name="van Driessche N."/>
            <person name="Cronin A."/>
            <person name="Goodhead I."/>
            <person name="Muzny D.M."/>
            <person name="Mourier T."/>
            <person name="Pain A."/>
            <person name="Lu M."/>
            <person name="Harper D."/>
            <person name="Lindsay R."/>
            <person name="Hauser H."/>
            <person name="James K.D."/>
            <person name="Quiles M."/>
            <person name="Madan Babu M."/>
            <person name="Saito T."/>
            <person name="Buchrieser C."/>
            <person name="Wardroper A."/>
            <person name="Felder M."/>
            <person name="Thangavelu M."/>
            <person name="Johnson D."/>
            <person name="Knights A."/>
            <person name="Loulseged H."/>
            <person name="Mungall K.L."/>
            <person name="Oliver K."/>
            <person name="Price C."/>
            <person name="Quail M.A."/>
            <person name="Urushihara H."/>
            <person name="Hernandez J."/>
            <person name="Rabbinowitsch E."/>
            <person name="Steffen D."/>
            <person name="Sanders M."/>
            <person name="Ma J."/>
            <person name="Kohara Y."/>
            <person name="Sharp S."/>
            <person name="Simmonds M.N."/>
            <person name="Spiegler S."/>
            <person name="Tivey A."/>
            <person name="Sugano S."/>
            <person name="White B."/>
            <person name="Walker D."/>
            <person name="Woodward J.R."/>
            <person name="Winckler T."/>
            <person name="Tanaka Y."/>
            <person name="Shaulsky G."/>
            <person name="Schleicher M."/>
            <person name="Weinstock G.M."/>
            <person name="Rosenthal A."/>
            <person name="Cox E.C."/>
            <person name="Chisholm R.L."/>
            <person name="Gibbs R.A."/>
            <person name="Loomis W.F."/>
            <person name="Platzer M."/>
            <person name="Kay R.R."/>
            <person name="Williams J.G."/>
            <person name="Dear P.H."/>
            <person name="Noegel A.A."/>
            <person name="Barrell B.G."/>
            <person name="Kuspa A."/>
        </authorList>
    </citation>
    <scope>NUCLEOTIDE SEQUENCE [LARGE SCALE GENOMIC DNA]</scope>
    <source>
        <strain>AX4</strain>
    </source>
</reference>
<dbReference type="EMBL" id="AAFI02000012">
    <property type="protein sequence ID" value="EAL70059.1"/>
    <property type="molecule type" value="Genomic_DNA"/>
</dbReference>
<dbReference type="RefSeq" id="XP_643920.1">
    <property type="nucleotide sequence ID" value="XM_638828.1"/>
</dbReference>
<dbReference type="SMR" id="Q86IY1"/>
<dbReference type="FunCoup" id="Q86IY1">
    <property type="interactions" value="435"/>
</dbReference>
<dbReference type="PaxDb" id="44689-DDB0167891"/>
<dbReference type="EnsemblProtists" id="EAL70059">
    <property type="protein sequence ID" value="EAL70059"/>
    <property type="gene ID" value="DDB_G0274333"/>
</dbReference>
<dbReference type="GeneID" id="8619347"/>
<dbReference type="KEGG" id="ddi:DDB_G0274333"/>
<dbReference type="dictyBase" id="DDB_G0274333"/>
<dbReference type="VEuPathDB" id="AmoebaDB:DDB_G0274333"/>
<dbReference type="eggNOG" id="ENOG502RIIX">
    <property type="taxonomic scope" value="Eukaryota"/>
</dbReference>
<dbReference type="HOGENOM" id="CLU_2201985_0_0_1"/>
<dbReference type="InParanoid" id="Q86IY1"/>
<dbReference type="OMA" id="NCENTNH"/>
<dbReference type="PRO" id="PR:Q86IY1"/>
<dbReference type="Proteomes" id="UP000002195">
    <property type="component" value="Chromosome 2"/>
</dbReference>
<dbReference type="GO" id="GO:0070176">
    <property type="term" value="C:DRM complex"/>
    <property type="evidence" value="ECO:0007669"/>
    <property type="project" value="InterPro"/>
</dbReference>
<dbReference type="GO" id="GO:0006355">
    <property type="term" value="P:regulation of DNA-templated transcription"/>
    <property type="evidence" value="ECO:0007669"/>
    <property type="project" value="InterPro"/>
</dbReference>
<dbReference type="InterPro" id="IPR018737">
    <property type="entry name" value="DREAM_LIN52"/>
</dbReference>
<dbReference type="Pfam" id="PF10044">
    <property type="entry name" value="LIN52"/>
    <property type="match status" value="1"/>
</dbReference>
<accession>Q86IY1</accession>
<accession>Q555Z0</accession>
<organism>
    <name type="scientific">Dictyostelium discoideum</name>
    <name type="common">Social amoeba</name>
    <dbReference type="NCBI Taxonomy" id="44689"/>
    <lineage>
        <taxon>Eukaryota</taxon>
        <taxon>Amoebozoa</taxon>
        <taxon>Evosea</taxon>
        <taxon>Eumycetozoa</taxon>
        <taxon>Dictyostelia</taxon>
        <taxon>Dictyosteliales</taxon>
        <taxon>Dictyosteliaceae</taxon>
        <taxon>Dictyostelium</taxon>
    </lineage>
</organism>
<protein>
    <recommendedName>
        <fullName>Putative uncharacterized protein DDB_G0274333</fullName>
    </recommendedName>
</protein>
<name>Y7891_DICDI</name>
<feature type="chain" id="PRO_0000348146" description="Putative uncharacterized protein DDB_G0274333">
    <location>
        <begin position="1"/>
        <end position="108"/>
    </location>
</feature>
<feature type="region of interest" description="Disordered" evidence="1">
    <location>
        <begin position="81"/>
        <end position="108"/>
    </location>
</feature>
<feature type="compositionally biased region" description="Low complexity" evidence="1">
    <location>
        <begin position="83"/>
        <end position="99"/>
    </location>
</feature>
<gene>
    <name type="ORF">DDB_G0274333</name>
</gene>
<sequence>MSDTHDDRVKQLVEFLDPLVDDSFKIKFNELSKYSKEELKQHTQKLEDWALALGVAEQKQLQTGRLLGIISDFNEFNCENTNHHQQQQNHQNQQQQQQQPNGIFENNI</sequence>